<feature type="chain" id="PRO_0000340863" description="Tetraacyldisaccharide 4'-kinase">
    <location>
        <begin position="1"/>
        <end position="337"/>
    </location>
</feature>
<feature type="binding site" evidence="1">
    <location>
        <begin position="72"/>
        <end position="79"/>
    </location>
    <ligand>
        <name>ATP</name>
        <dbReference type="ChEBI" id="CHEBI:30616"/>
    </ligand>
</feature>
<protein>
    <recommendedName>
        <fullName evidence="1">Tetraacyldisaccharide 4'-kinase</fullName>
        <ecNumber evidence="1">2.7.1.130</ecNumber>
    </recommendedName>
    <alternativeName>
        <fullName evidence="1">Lipid A 4'-kinase</fullName>
    </alternativeName>
</protein>
<evidence type="ECO:0000255" key="1">
    <source>
        <dbReference type="HAMAP-Rule" id="MF_00409"/>
    </source>
</evidence>
<proteinExistence type="inferred from homology"/>
<sequence length="337" mass="37082">MQAFVNRLWYPKGFLDTQSKGLFLLLKIIQLLLLPLSLLFAAITALRRSLFKIGIKKQSRLPVPVIVVGNITVGGSGKTPTVIYLVELLRRHGYQPGVISRGYGVNFEGVRSVLPSMAARDVGDEPAMIVGRTGVPMVIGRNRIDAGEHLLTHFNVDVIISDDGLQHYALGRDIELLILDGDRRFGNGSLLPAGPLREGLWRVKKVDAVVVNGGQSIEGEHAMSLVPSALKPVTHSNEQPPALNDAVVAIAGIGNPQRFFTSLINAGFNLNGVKAFEDHQAYCEEELTELCGDLPIIMTEKDAVKCRDFAKQNWWYLPVDAKLSSNFDRLILDKLKR</sequence>
<reference key="1">
    <citation type="submission" date="2007-08" db="EMBL/GenBank/DDBJ databases">
        <title>Complete sequence of Shewanella sediminis HAW-EB3.</title>
        <authorList>
            <consortium name="US DOE Joint Genome Institute"/>
            <person name="Copeland A."/>
            <person name="Lucas S."/>
            <person name="Lapidus A."/>
            <person name="Barry K."/>
            <person name="Glavina del Rio T."/>
            <person name="Dalin E."/>
            <person name="Tice H."/>
            <person name="Pitluck S."/>
            <person name="Chertkov O."/>
            <person name="Brettin T."/>
            <person name="Bruce D."/>
            <person name="Detter J.C."/>
            <person name="Han C."/>
            <person name="Schmutz J."/>
            <person name="Larimer F."/>
            <person name="Land M."/>
            <person name="Hauser L."/>
            <person name="Kyrpides N."/>
            <person name="Kim E."/>
            <person name="Zhao J.-S."/>
            <person name="Richardson P."/>
        </authorList>
    </citation>
    <scope>NUCLEOTIDE SEQUENCE [LARGE SCALE GENOMIC DNA]</scope>
    <source>
        <strain>HAW-EB3</strain>
    </source>
</reference>
<accession>A8FX59</accession>
<gene>
    <name evidence="1" type="primary">lpxK</name>
    <name type="ordered locus">Ssed_2825</name>
</gene>
<name>LPXK_SHESH</name>
<comment type="function">
    <text evidence="1">Transfers the gamma-phosphate of ATP to the 4'-position of a tetraacyldisaccharide 1-phosphate intermediate (termed DS-1-P) to form tetraacyldisaccharide 1,4'-bis-phosphate (lipid IVA).</text>
</comment>
<comment type="catalytic activity">
    <reaction evidence="1">
        <text>a lipid A disaccharide + ATP = a lipid IVA + ADP + H(+)</text>
        <dbReference type="Rhea" id="RHEA:67840"/>
        <dbReference type="ChEBI" id="CHEBI:15378"/>
        <dbReference type="ChEBI" id="CHEBI:30616"/>
        <dbReference type="ChEBI" id="CHEBI:176343"/>
        <dbReference type="ChEBI" id="CHEBI:176425"/>
        <dbReference type="ChEBI" id="CHEBI:456216"/>
        <dbReference type="EC" id="2.7.1.130"/>
    </reaction>
</comment>
<comment type="pathway">
    <text evidence="1">Glycolipid biosynthesis; lipid IV(A) biosynthesis; lipid IV(A) from (3R)-3-hydroxytetradecanoyl-[acyl-carrier-protein] and UDP-N-acetyl-alpha-D-glucosamine: step 6/6.</text>
</comment>
<comment type="similarity">
    <text evidence="1">Belongs to the LpxK family.</text>
</comment>
<organism>
    <name type="scientific">Shewanella sediminis (strain HAW-EB3)</name>
    <dbReference type="NCBI Taxonomy" id="425104"/>
    <lineage>
        <taxon>Bacteria</taxon>
        <taxon>Pseudomonadati</taxon>
        <taxon>Pseudomonadota</taxon>
        <taxon>Gammaproteobacteria</taxon>
        <taxon>Alteromonadales</taxon>
        <taxon>Shewanellaceae</taxon>
        <taxon>Shewanella</taxon>
    </lineage>
</organism>
<dbReference type="EC" id="2.7.1.130" evidence="1"/>
<dbReference type="EMBL" id="CP000821">
    <property type="protein sequence ID" value="ABV37432.1"/>
    <property type="molecule type" value="Genomic_DNA"/>
</dbReference>
<dbReference type="RefSeq" id="WP_012143162.1">
    <property type="nucleotide sequence ID" value="NC_009831.1"/>
</dbReference>
<dbReference type="SMR" id="A8FX59"/>
<dbReference type="STRING" id="425104.Ssed_2825"/>
<dbReference type="KEGG" id="sse:Ssed_2825"/>
<dbReference type="eggNOG" id="COG1663">
    <property type="taxonomic scope" value="Bacteria"/>
</dbReference>
<dbReference type="HOGENOM" id="CLU_038816_2_0_6"/>
<dbReference type="OrthoDB" id="9766423at2"/>
<dbReference type="UniPathway" id="UPA00359">
    <property type="reaction ID" value="UER00482"/>
</dbReference>
<dbReference type="Proteomes" id="UP000002015">
    <property type="component" value="Chromosome"/>
</dbReference>
<dbReference type="GO" id="GO:0005886">
    <property type="term" value="C:plasma membrane"/>
    <property type="evidence" value="ECO:0007669"/>
    <property type="project" value="TreeGrafter"/>
</dbReference>
<dbReference type="GO" id="GO:0005524">
    <property type="term" value="F:ATP binding"/>
    <property type="evidence" value="ECO:0007669"/>
    <property type="project" value="UniProtKB-UniRule"/>
</dbReference>
<dbReference type="GO" id="GO:0009029">
    <property type="term" value="F:tetraacyldisaccharide 4'-kinase activity"/>
    <property type="evidence" value="ECO:0007669"/>
    <property type="project" value="UniProtKB-UniRule"/>
</dbReference>
<dbReference type="GO" id="GO:0009245">
    <property type="term" value="P:lipid A biosynthetic process"/>
    <property type="evidence" value="ECO:0007669"/>
    <property type="project" value="UniProtKB-UniRule"/>
</dbReference>
<dbReference type="GO" id="GO:0009244">
    <property type="term" value="P:lipopolysaccharide core region biosynthetic process"/>
    <property type="evidence" value="ECO:0007669"/>
    <property type="project" value="TreeGrafter"/>
</dbReference>
<dbReference type="HAMAP" id="MF_00409">
    <property type="entry name" value="LpxK"/>
    <property type="match status" value="1"/>
</dbReference>
<dbReference type="InterPro" id="IPR003758">
    <property type="entry name" value="LpxK"/>
</dbReference>
<dbReference type="InterPro" id="IPR027417">
    <property type="entry name" value="P-loop_NTPase"/>
</dbReference>
<dbReference type="NCBIfam" id="TIGR00682">
    <property type="entry name" value="lpxK"/>
    <property type="match status" value="1"/>
</dbReference>
<dbReference type="PANTHER" id="PTHR42724">
    <property type="entry name" value="TETRAACYLDISACCHARIDE 4'-KINASE"/>
    <property type="match status" value="1"/>
</dbReference>
<dbReference type="PANTHER" id="PTHR42724:SF1">
    <property type="entry name" value="TETRAACYLDISACCHARIDE 4'-KINASE, MITOCHONDRIAL-RELATED"/>
    <property type="match status" value="1"/>
</dbReference>
<dbReference type="Pfam" id="PF02606">
    <property type="entry name" value="LpxK"/>
    <property type="match status" value="1"/>
</dbReference>
<dbReference type="SUPFAM" id="SSF52540">
    <property type="entry name" value="P-loop containing nucleoside triphosphate hydrolases"/>
    <property type="match status" value="1"/>
</dbReference>
<keyword id="KW-0067">ATP-binding</keyword>
<keyword id="KW-0418">Kinase</keyword>
<keyword id="KW-0441">Lipid A biosynthesis</keyword>
<keyword id="KW-0444">Lipid biosynthesis</keyword>
<keyword id="KW-0443">Lipid metabolism</keyword>
<keyword id="KW-0547">Nucleotide-binding</keyword>
<keyword id="KW-1185">Reference proteome</keyword>
<keyword id="KW-0808">Transferase</keyword>